<sequence>MGANEFRFFLSCDINSPVTFRIEKLDGNLPVKKSSDSGVVSIAEEKKPELYIECALYIDGAPFGLPMRTRLKTTGPPYCWNELITLSSKYRDLTAHSQLAITVWDVSCGKTEGLIGGATVLLFNSKMQMKSGKQKLRLWQGKEADGSFPTSTPGKVPRHERGELERLEKLMNKYERGQIQSIDWLDRLMLKSLDTIKEQESTKHGSSHLFVVIDFCSFEHRVVFQESGANLFITAPIGSTNEFVTVWDTELGKTNPSENKQLKLARSLDRGIIDRDLKPSNIERKSIQRVLKYPPTRTLSGDERQLLWKFRFSLMSEKRALTKFLRCVEWSDVQEAKQAIQLMYKWEMIDVCDALELLSPLFESEEVRAYAVSVLERADDEELQCYLLQLVQALRFERSDRSCLSQFLVQRALQNIELASFLRWYVAVELHDHVYAKRFYSTYELLEENIIKLPPGVNGEDGYQLWQSLVRQTELTAQLCSITREVRNVRGNTQKKIEKLRQLLGGLLSELTYFEEPIRSPLTPNVLIKGIVAGESSLFKSALHPLRLTFRTPEEGGSCKLIFKKGDDLRQDQLVVQMVWLMDRLLKLENLDLCLTPYKVLATGHDEGMLEFIPSRSLAQILSEHRSITSYLQKFHPDEHAPFGITATCLDTFIKSCAGYSVITYILGIGDRHLDNLLLTDDGRLFHVDFAFILGRDPKPFPPPMKLCKEMVEAMGGAESQYYTRFKSYCCEAYNILRKSSNLILNLFHLMAGSTIPDIASDPEKGILKLQEKFRLDMDDEACIHFFQDLINESVSALFPQMVETIHRWAQYWR</sequence>
<accession>P42339</accession>
<accession>O22695</accession>
<dbReference type="EC" id="2.7.1.137" evidence="1"/>
<dbReference type="EMBL" id="U10669">
    <property type="protein sequence ID" value="AAA83427.1"/>
    <property type="molecule type" value="mRNA"/>
</dbReference>
<dbReference type="EMBL" id="AC002292">
    <property type="protein sequence ID" value="AAB71971.1"/>
    <property type="molecule type" value="Genomic_DNA"/>
</dbReference>
<dbReference type="EMBL" id="CP002684">
    <property type="protein sequence ID" value="AEE33693.1"/>
    <property type="molecule type" value="Genomic_DNA"/>
</dbReference>
<dbReference type="EMBL" id="BT000878">
    <property type="protein sequence ID" value="AAN41278.1"/>
    <property type="molecule type" value="mRNA"/>
</dbReference>
<dbReference type="PIR" id="B96630">
    <property type="entry name" value="B96630"/>
</dbReference>
<dbReference type="RefSeq" id="NP_176251.1">
    <property type="nucleotide sequence ID" value="NM_104735.4"/>
</dbReference>
<dbReference type="SMR" id="P42339"/>
<dbReference type="BioGRID" id="27568">
    <property type="interactions" value="1"/>
</dbReference>
<dbReference type="FunCoup" id="P42339">
    <property type="interactions" value="4588"/>
</dbReference>
<dbReference type="IntAct" id="P42339">
    <property type="interactions" value="2"/>
</dbReference>
<dbReference type="STRING" id="3702.P42339"/>
<dbReference type="PaxDb" id="3702-AT1G60490.1"/>
<dbReference type="ProteomicsDB" id="226176"/>
<dbReference type="EnsemblPlants" id="AT1G60490.1">
    <property type="protein sequence ID" value="AT1G60490.1"/>
    <property type="gene ID" value="AT1G60490"/>
</dbReference>
<dbReference type="GeneID" id="842344"/>
<dbReference type="Gramene" id="AT1G60490.1">
    <property type="protein sequence ID" value="AT1G60490.1"/>
    <property type="gene ID" value="AT1G60490"/>
</dbReference>
<dbReference type="KEGG" id="ath:AT1G60490"/>
<dbReference type="Araport" id="AT1G60490"/>
<dbReference type="TAIR" id="AT1G60490">
    <property type="gene designation" value="VPS34"/>
</dbReference>
<dbReference type="eggNOG" id="KOG0906">
    <property type="taxonomic scope" value="Eukaryota"/>
</dbReference>
<dbReference type="HOGENOM" id="CLU_004869_0_0_1"/>
<dbReference type="InParanoid" id="P42339"/>
<dbReference type="OMA" id="LHKFAQY"/>
<dbReference type="PhylomeDB" id="P42339"/>
<dbReference type="BioCyc" id="ARA:AT1G60490-MONOMER"/>
<dbReference type="BRENDA" id="2.7.1.137">
    <property type="organism ID" value="399"/>
</dbReference>
<dbReference type="PRO" id="PR:P42339"/>
<dbReference type="Proteomes" id="UP000006548">
    <property type="component" value="Chromosome 1"/>
</dbReference>
<dbReference type="ExpressionAtlas" id="P42339">
    <property type="expression patterns" value="baseline and differential"/>
</dbReference>
<dbReference type="GO" id="GO:0005942">
    <property type="term" value="C:phosphatidylinositol 3-kinase complex"/>
    <property type="evidence" value="ECO:0000314"/>
    <property type="project" value="UniProtKB"/>
</dbReference>
<dbReference type="GO" id="GO:0016303">
    <property type="term" value="F:1-phosphatidylinositol-3-kinase activity"/>
    <property type="evidence" value="ECO:0007669"/>
    <property type="project" value="UniProtKB-EC"/>
</dbReference>
<dbReference type="GO" id="GO:0005524">
    <property type="term" value="F:ATP binding"/>
    <property type="evidence" value="ECO:0007669"/>
    <property type="project" value="UniProtKB-KW"/>
</dbReference>
<dbReference type="GO" id="GO:0006897">
    <property type="term" value="P:endocytosis"/>
    <property type="evidence" value="ECO:0000314"/>
    <property type="project" value="TAIR"/>
</dbReference>
<dbReference type="GO" id="GO:0055046">
    <property type="term" value="P:microgametogenesis"/>
    <property type="evidence" value="ECO:0000315"/>
    <property type="project" value="TAIR"/>
</dbReference>
<dbReference type="GO" id="GO:1900426">
    <property type="term" value="P:positive regulation of defense response to bacterium"/>
    <property type="evidence" value="ECO:0000315"/>
    <property type="project" value="UniProtKB"/>
</dbReference>
<dbReference type="GO" id="GO:0072593">
    <property type="term" value="P:reactive oxygen species metabolic process"/>
    <property type="evidence" value="ECO:0000315"/>
    <property type="project" value="TAIR"/>
</dbReference>
<dbReference type="GO" id="GO:0006521">
    <property type="term" value="P:regulation of amino acid metabolic process"/>
    <property type="evidence" value="ECO:0000315"/>
    <property type="project" value="UniProtKB"/>
</dbReference>
<dbReference type="GO" id="GO:2000214">
    <property type="term" value="P:regulation of proline metabolic process"/>
    <property type="evidence" value="ECO:0000315"/>
    <property type="project" value="UniProtKB"/>
</dbReference>
<dbReference type="GO" id="GO:0090333">
    <property type="term" value="P:regulation of stomatal closure"/>
    <property type="evidence" value="ECO:0000315"/>
    <property type="project" value="UniProtKB"/>
</dbReference>
<dbReference type="GO" id="GO:0009617">
    <property type="term" value="P:response to bacterium"/>
    <property type="evidence" value="ECO:0000270"/>
    <property type="project" value="UniProtKB"/>
</dbReference>
<dbReference type="GO" id="GO:0009751">
    <property type="term" value="P:response to salicylic acid"/>
    <property type="evidence" value="ECO:0000270"/>
    <property type="project" value="UniProtKB"/>
</dbReference>
<dbReference type="GO" id="GO:1902074">
    <property type="term" value="P:response to salt"/>
    <property type="evidence" value="ECO:0000315"/>
    <property type="project" value="UniProtKB"/>
</dbReference>
<dbReference type="GO" id="GO:0009651">
    <property type="term" value="P:response to salt stress"/>
    <property type="evidence" value="ECO:0000315"/>
    <property type="project" value="TAIR"/>
</dbReference>
<dbReference type="CDD" id="cd08397">
    <property type="entry name" value="C2_PI3K_class_III"/>
    <property type="match status" value="1"/>
</dbReference>
<dbReference type="CDD" id="cd00870">
    <property type="entry name" value="PI3Ka_III"/>
    <property type="match status" value="1"/>
</dbReference>
<dbReference type="CDD" id="cd00896">
    <property type="entry name" value="PI3Kc_III"/>
    <property type="match status" value="1"/>
</dbReference>
<dbReference type="FunFam" id="3.30.1010.10:FF:000002">
    <property type="entry name" value="Phosphatidylinositol 3-kinase catalytic subunit type 3"/>
    <property type="match status" value="1"/>
</dbReference>
<dbReference type="FunFam" id="2.60.40.150:FF:000171">
    <property type="entry name" value="Phosphatidylinositol 3-kinase VPS34"/>
    <property type="match status" value="1"/>
</dbReference>
<dbReference type="FunFam" id="1.10.1070.11:FF:000014">
    <property type="entry name" value="Phosphatidylinositol 3-kinase, root isoform"/>
    <property type="match status" value="1"/>
</dbReference>
<dbReference type="FunFam" id="1.25.40.70:FF:000012">
    <property type="entry name" value="phosphatidylinositol 3-kinase, root isoform"/>
    <property type="match status" value="1"/>
</dbReference>
<dbReference type="Gene3D" id="2.60.40.150">
    <property type="entry name" value="C2 domain"/>
    <property type="match status" value="1"/>
</dbReference>
<dbReference type="Gene3D" id="1.10.1070.11">
    <property type="entry name" value="Phosphatidylinositol 3-/4-kinase, catalytic domain"/>
    <property type="match status" value="1"/>
</dbReference>
<dbReference type="Gene3D" id="3.30.1010.10">
    <property type="entry name" value="Phosphatidylinositol 3-kinase Catalytic Subunit, Chain A, domain 4"/>
    <property type="match status" value="1"/>
</dbReference>
<dbReference type="Gene3D" id="1.25.40.70">
    <property type="entry name" value="Phosphatidylinositol 3-kinase, accessory domain (PIK)"/>
    <property type="match status" value="1"/>
</dbReference>
<dbReference type="InterPro" id="IPR016024">
    <property type="entry name" value="ARM-type_fold"/>
</dbReference>
<dbReference type="InterPro" id="IPR035892">
    <property type="entry name" value="C2_domain_sf"/>
</dbReference>
<dbReference type="InterPro" id="IPR011009">
    <property type="entry name" value="Kinase-like_dom_sf"/>
</dbReference>
<dbReference type="InterPro" id="IPR000403">
    <property type="entry name" value="PI3/4_kinase_cat_dom"/>
</dbReference>
<dbReference type="InterPro" id="IPR036940">
    <property type="entry name" value="PI3/4_kinase_cat_sf"/>
</dbReference>
<dbReference type="InterPro" id="IPR018936">
    <property type="entry name" value="PI3/4_kinase_CS"/>
</dbReference>
<dbReference type="InterPro" id="IPR002420">
    <property type="entry name" value="PI3K-type_C2_dom"/>
</dbReference>
<dbReference type="InterPro" id="IPR001263">
    <property type="entry name" value="PI3K_accessory_dom"/>
</dbReference>
<dbReference type="InterPro" id="IPR042236">
    <property type="entry name" value="PI3K_accessory_sf"/>
</dbReference>
<dbReference type="InterPro" id="IPR008290">
    <property type="entry name" value="PI3K_Vps34"/>
</dbReference>
<dbReference type="InterPro" id="IPR015433">
    <property type="entry name" value="PI_Kinase"/>
</dbReference>
<dbReference type="PANTHER" id="PTHR10048:SF7">
    <property type="entry name" value="PHOSPHATIDYLINOSITOL 3-KINASE CATALYTIC SUBUNIT TYPE 3"/>
    <property type="match status" value="1"/>
</dbReference>
<dbReference type="PANTHER" id="PTHR10048">
    <property type="entry name" value="PHOSPHATIDYLINOSITOL KINASE"/>
    <property type="match status" value="1"/>
</dbReference>
<dbReference type="Pfam" id="PF00454">
    <property type="entry name" value="PI3_PI4_kinase"/>
    <property type="match status" value="1"/>
</dbReference>
<dbReference type="Pfam" id="PF00792">
    <property type="entry name" value="PI3K_C2"/>
    <property type="match status" value="1"/>
</dbReference>
<dbReference type="Pfam" id="PF00613">
    <property type="entry name" value="PI3Ka"/>
    <property type="match status" value="1"/>
</dbReference>
<dbReference type="PIRSF" id="PIRSF000587">
    <property type="entry name" value="PI3K_Vps34"/>
    <property type="match status" value="1"/>
</dbReference>
<dbReference type="SMART" id="SM00142">
    <property type="entry name" value="PI3K_C2"/>
    <property type="match status" value="1"/>
</dbReference>
<dbReference type="SMART" id="SM00145">
    <property type="entry name" value="PI3Ka"/>
    <property type="match status" value="1"/>
</dbReference>
<dbReference type="SMART" id="SM00146">
    <property type="entry name" value="PI3Kc"/>
    <property type="match status" value="1"/>
</dbReference>
<dbReference type="SUPFAM" id="SSF48371">
    <property type="entry name" value="ARM repeat"/>
    <property type="match status" value="1"/>
</dbReference>
<dbReference type="SUPFAM" id="SSF49562">
    <property type="entry name" value="C2 domain (Calcium/lipid-binding domain, CaLB)"/>
    <property type="match status" value="1"/>
</dbReference>
<dbReference type="SUPFAM" id="SSF56112">
    <property type="entry name" value="Protein kinase-like (PK-like)"/>
    <property type="match status" value="1"/>
</dbReference>
<dbReference type="PROSITE" id="PS51547">
    <property type="entry name" value="C2_PI3K"/>
    <property type="match status" value="1"/>
</dbReference>
<dbReference type="PROSITE" id="PS00915">
    <property type="entry name" value="PI3_4_KINASE_1"/>
    <property type="match status" value="1"/>
</dbReference>
<dbReference type="PROSITE" id="PS00916">
    <property type="entry name" value="PI3_4_KINASE_2"/>
    <property type="match status" value="1"/>
</dbReference>
<dbReference type="PROSITE" id="PS50290">
    <property type="entry name" value="PI3_4_KINASE_3"/>
    <property type="match status" value="1"/>
</dbReference>
<dbReference type="PROSITE" id="PS51545">
    <property type="entry name" value="PIK_HELICAL"/>
    <property type="match status" value="1"/>
</dbReference>
<gene>
    <name evidence="10" type="primary">VPS34</name>
    <name evidence="12" type="ordered locus">At1g60490</name>
    <name evidence="13" type="ORF">F8A5.4</name>
</gene>
<comment type="function">
    <text evidence="6 9">Involved in the negative regulation of proline, hydrophobic and aromatic amino acids accumulation, especially in response to salt (NaCl), either through inhibition of their synthesis and/or promotion of their catabolism (PubMed:25628629). Triggers defense responses (e.g. pathogenesis related (PR1 and PR5) gene expression and hydrogen peroxide H(2)O(2) burst) to the bacterial pathogen compatible Pseudomonas syringae pv tomato DC3000 (Pst DC3000) and incompatible Pst DC3000 (avrRpt2), by regulating reactive ogygen species (ROS) production and by promoting stomatal closure (PubMed:32117334).</text>
</comment>
<comment type="catalytic activity">
    <reaction evidence="1">
        <text>a 1,2-diacyl-sn-glycero-3-phospho-(1D-myo-inositol) + ATP = a 1,2-diacyl-sn-glycero-3-phospho-(1D-myo-inositol-3-phosphate) + ADP + H(+)</text>
        <dbReference type="Rhea" id="RHEA:12709"/>
        <dbReference type="ChEBI" id="CHEBI:15378"/>
        <dbReference type="ChEBI" id="CHEBI:30616"/>
        <dbReference type="ChEBI" id="CHEBI:57880"/>
        <dbReference type="ChEBI" id="CHEBI:58088"/>
        <dbReference type="ChEBI" id="CHEBI:456216"/>
        <dbReference type="EC" id="2.7.1.137"/>
    </reaction>
</comment>
<comment type="activity regulation">
    <text evidence="6">The PI3K inhibitor LY294002 affects phosphatidylinositol 3-phosphate (PI3P) levels and triggers a decrease in proline, hydrophobic and aromatic amino acids, and sugars (e.g. raffinose) accumulation in response to salt treatment correlated with lower P5CS1 expression and higher ProDH1 expression, genes involved in proline biosynthesis and catabolism, respectively.</text>
</comment>
<comment type="subunit">
    <text evidence="5 7 8">Interacts with VPS15 (PubMed:22361507). Component of a complex made of VPS38/USL1 and PI3K main subunits such as VPS15, ATG6/VPS30 and VPS34 (PubMed:29897620). Binds directly to VPS38/USL1 (PubMed:29184027).</text>
</comment>
<comment type="induction">
    <text evidence="9">Induced by salicylic acid (SA) and upon infection by the incompatible bacterial pathogen Pseudomonas syringae pv tomato DC3000 (avrRpt2).</text>
</comment>
<comment type="disruption phenotype">
    <text evidence="6">Homozygous mutants are lethal (PubMed:25628629). In hemizygous mutants, increased expression of ProDH1 (PubMed:25628629). Reduced proline accumulation in response to salt (NaCl) (PubMed:25628629).</text>
</comment>
<comment type="similarity">
    <text evidence="4">Belongs to the PI3/PI4-kinase family.</text>
</comment>
<name>PI3K_ARATH</name>
<reference key="1">
    <citation type="journal article" date="1994" name="Proc. Natl. Acad. Sci. U.S.A.">
        <title>AtVPS34, a phosphatidylinositol 3-kinase of Arabidopsis thaliana, is an essential protein with homology to a calcium-dependent lipid binding domain.</title>
        <authorList>
            <person name="Welters P."/>
            <person name="Takegawa K."/>
            <person name="Emr S.D."/>
            <person name="Chrispeels M.J."/>
        </authorList>
    </citation>
    <scope>NUCLEOTIDE SEQUENCE [MRNA]</scope>
    <source>
        <tissue>Seedling</tissue>
    </source>
</reference>
<reference key="2">
    <citation type="journal article" date="2000" name="Nature">
        <title>Sequence and analysis of chromosome 1 of the plant Arabidopsis thaliana.</title>
        <authorList>
            <person name="Theologis A."/>
            <person name="Ecker J.R."/>
            <person name="Palm C.J."/>
            <person name="Federspiel N.A."/>
            <person name="Kaul S."/>
            <person name="White O."/>
            <person name="Alonso J."/>
            <person name="Altafi H."/>
            <person name="Araujo R."/>
            <person name="Bowman C.L."/>
            <person name="Brooks S.Y."/>
            <person name="Buehler E."/>
            <person name="Chan A."/>
            <person name="Chao Q."/>
            <person name="Chen H."/>
            <person name="Cheuk R.F."/>
            <person name="Chin C.W."/>
            <person name="Chung M.K."/>
            <person name="Conn L."/>
            <person name="Conway A.B."/>
            <person name="Conway A.R."/>
            <person name="Creasy T.H."/>
            <person name="Dewar K."/>
            <person name="Dunn P."/>
            <person name="Etgu P."/>
            <person name="Feldblyum T.V."/>
            <person name="Feng J.-D."/>
            <person name="Fong B."/>
            <person name="Fujii C.Y."/>
            <person name="Gill J.E."/>
            <person name="Goldsmith A.D."/>
            <person name="Haas B."/>
            <person name="Hansen N.F."/>
            <person name="Hughes B."/>
            <person name="Huizar L."/>
            <person name="Hunter J.L."/>
            <person name="Jenkins J."/>
            <person name="Johnson-Hopson C."/>
            <person name="Khan S."/>
            <person name="Khaykin E."/>
            <person name="Kim C.J."/>
            <person name="Koo H.L."/>
            <person name="Kremenetskaia I."/>
            <person name="Kurtz D.B."/>
            <person name="Kwan A."/>
            <person name="Lam B."/>
            <person name="Langin-Hooper S."/>
            <person name="Lee A."/>
            <person name="Lee J.M."/>
            <person name="Lenz C.A."/>
            <person name="Li J.H."/>
            <person name="Li Y.-P."/>
            <person name="Lin X."/>
            <person name="Liu S.X."/>
            <person name="Liu Z.A."/>
            <person name="Luros J.S."/>
            <person name="Maiti R."/>
            <person name="Marziali A."/>
            <person name="Militscher J."/>
            <person name="Miranda M."/>
            <person name="Nguyen M."/>
            <person name="Nierman W.C."/>
            <person name="Osborne B.I."/>
            <person name="Pai G."/>
            <person name="Peterson J."/>
            <person name="Pham P.K."/>
            <person name="Rizzo M."/>
            <person name="Rooney T."/>
            <person name="Rowley D."/>
            <person name="Sakano H."/>
            <person name="Salzberg S.L."/>
            <person name="Schwartz J.R."/>
            <person name="Shinn P."/>
            <person name="Southwick A.M."/>
            <person name="Sun H."/>
            <person name="Tallon L.J."/>
            <person name="Tambunga G."/>
            <person name="Toriumi M.J."/>
            <person name="Town C.D."/>
            <person name="Utterback T."/>
            <person name="Van Aken S."/>
            <person name="Vaysberg M."/>
            <person name="Vysotskaia V.S."/>
            <person name="Walker M."/>
            <person name="Wu D."/>
            <person name="Yu G."/>
            <person name="Fraser C.M."/>
            <person name="Venter J.C."/>
            <person name="Davis R.W."/>
        </authorList>
    </citation>
    <scope>NUCLEOTIDE SEQUENCE [LARGE SCALE GENOMIC DNA]</scope>
    <source>
        <strain>cv. Columbia</strain>
    </source>
</reference>
<reference key="3">
    <citation type="journal article" date="2017" name="Plant J.">
        <title>Araport11: a complete reannotation of the Arabidopsis thaliana reference genome.</title>
        <authorList>
            <person name="Cheng C.Y."/>
            <person name="Krishnakumar V."/>
            <person name="Chan A.P."/>
            <person name="Thibaud-Nissen F."/>
            <person name="Schobel S."/>
            <person name="Town C.D."/>
        </authorList>
    </citation>
    <scope>GENOME REANNOTATION</scope>
    <source>
        <strain>cv. Columbia</strain>
    </source>
</reference>
<reference key="4">
    <citation type="journal article" date="2003" name="Science">
        <title>Empirical analysis of transcriptional activity in the Arabidopsis genome.</title>
        <authorList>
            <person name="Yamada K."/>
            <person name="Lim J."/>
            <person name="Dale J.M."/>
            <person name="Chen H."/>
            <person name="Shinn P."/>
            <person name="Palm C.J."/>
            <person name="Southwick A.M."/>
            <person name="Wu H.C."/>
            <person name="Kim C.J."/>
            <person name="Nguyen M."/>
            <person name="Pham P.K."/>
            <person name="Cheuk R.F."/>
            <person name="Karlin-Newmann G."/>
            <person name="Liu S.X."/>
            <person name="Lam B."/>
            <person name="Sakano H."/>
            <person name="Wu T."/>
            <person name="Yu G."/>
            <person name="Miranda M."/>
            <person name="Quach H.L."/>
            <person name="Tripp M."/>
            <person name="Chang C.H."/>
            <person name="Lee J.M."/>
            <person name="Toriumi M.J."/>
            <person name="Chan M.M."/>
            <person name="Tang C.C."/>
            <person name="Onodera C.S."/>
            <person name="Deng J.M."/>
            <person name="Akiyama K."/>
            <person name="Ansari Y."/>
            <person name="Arakawa T."/>
            <person name="Banh J."/>
            <person name="Banno F."/>
            <person name="Bowser L."/>
            <person name="Brooks S.Y."/>
            <person name="Carninci P."/>
            <person name="Chao Q."/>
            <person name="Choy N."/>
            <person name="Enju A."/>
            <person name="Goldsmith A.D."/>
            <person name="Gurjal M."/>
            <person name="Hansen N.F."/>
            <person name="Hayashizaki Y."/>
            <person name="Johnson-Hopson C."/>
            <person name="Hsuan V.W."/>
            <person name="Iida K."/>
            <person name="Karnes M."/>
            <person name="Khan S."/>
            <person name="Koesema E."/>
            <person name="Ishida J."/>
            <person name="Jiang P.X."/>
            <person name="Jones T."/>
            <person name="Kawai J."/>
            <person name="Kamiya A."/>
            <person name="Meyers C."/>
            <person name="Nakajima M."/>
            <person name="Narusaka M."/>
            <person name="Seki M."/>
            <person name="Sakurai T."/>
            <person name="Satou M."/>
            <person name="Tamse R."/>
            <person name="Vaysberg M."/>
            <person name="Wallender E.K."/>
            <person name="Wong C."/>
            <person name="Yamamura Y."/>
            <person name="Yuan S."/>
            <person name="Shinozaki K."/>
            <person name="Davis R.W."/>
            <person name="Theologis A."/>
            <person name="Ecker J.R."/>
        </authorList>
    </citation>
    <scope>NUCLEOTIDE SEQUENCE [LARGE SCALE MRNA]</scope>
    <source>
        <strain>cv. Columbia</strain>
    </source>
</reference>
<reference key="5">
    <citation type="journal article" date="2012" name="J. Genet. Genomics">
        <title>Arabidopsis AtVPS15 plays essential roles in pollen germination possibly by interacting with AtVPS34.</title>
        <authorList>
            <person name="Wang W.-Y."/>
            <person name="Zhang L."/>
            <person name="Xing S."/>
            <person name="Ma Z."/>
            <person name="Liu J."/>
            <person name="Gu H."/>
            <person name="Qin G."/>
            <person name="Qu L.-J."/>
        </authorList>
    </citation>
    <scope>INTERACTION WITH VPS15</scope>
    <source>
        <strain>cv. Columbia</strain>
    </source>
</reference>
<reference key="6">
    <citation type="journal article" date="2014" name="Front. Plant Sci.">
        <title>Involvement of phosphatidylinositol 3-kinase in the regulation of proline catabolism in Arabidopsis thaliana.</title>
        <authorList>
            <person name="Leprince A.-S."/>
            <person name="Magalhaes N."/>
            <person name="De Vos D."/>
            <person name="Bordenave M."/>
            <person name="Crilat E."/>
            <person name="Clement G."/>
            <person name="Meyer C."/>
            <person name="Munnik T."/>
            <person name="Savoure A."/>
        </authorList>
    </citation>
    <scope>FUNCTION</scope>
    <scope>DISRUPTION PHENOTYPE</scope>
    <scope>ACTIVITY REGULATION</scope>
    <source>
        <strain>cv. Columbia</strain>
    </source>
</reference>
<reference key="7">
    <citation type="journal article" date="2018" name="New Phytol.">
        <title>The Arabidopsis USL1 controls multiple aspects of development by affecting late endosome morphology.</title>
        <authorList>
            <person name="Yuan R."/>
            <person name="Lan J."/>
            <person name="Fang Y."/>
            <person name="Yu H."/>
            <person name="Zhang J."/>
            <person name="Huang J."/>
            <person name="Qin G."/>
        </authorList>
    </citation>
    <scope>SUBUNIT</scope>
    <source>
        <strain>cv. Columbia</strain>
    </source>
</reference>
<reference key="8">
    <citation type="journal article" date="2018" name="Plant Physiol.">
        <title>Vacuolar trafficking protein VPS38 is dispensable for autophagy.</title>
        <authorList>
            <person name="Lee H.N."/>
            <person name="Zarza X."/>
            <person name="Kim J.H."/>
            <person name="Yoon M.J."/>
            <person name="Kim S.-H."/>
            <person name="Lee J.-H."/>
            <person name="Paris N."/>
            <person name="Munnik T."/>
            <person name="Otegui M.S."/>
            <person name="Chung T."/>
        </authorList>
    </citation>
    <scope>INTERACTION WITH VPS38/USL1</scope>
    <source>
        <strain>cv. Columbia</strain>
    </source>
</reference>
<reference key="9">
    <citation type="journal article" date="2019" name="Front. Plant Sci.">
        <title>Phosphoinositide 3-kinase promotes oxidative burst, stomatal closure and plant immunity in bacterial invasion.</title>
        <authorList>
            <person name="Zhang H."/>
            <person name="Liu X."/>
            <person name="Zhang X."/>
            <person name="Qin N."/>
            <person name="Xu K."/>
            <person name="Yin W."/>
            <person name="Zheng Y."/>
            <person name="Song Y."/>
            <person name="Zeng R."/>
            <person name="Liu J."/>
        </authorList>
    </citation>
    <scope>FUNCTION</scope>
    <scope>INDUCTION BY SALICYLIC ACID AND PSEUDOMONAS SYRINGAE</scope>
    <source>
        <strain>cv. Columbia</strain>
    </source>
</reference>
<evidence type="ECO:0000250" key="1">
    <source>
        <dbReference type="UniProtKB" id="P22543"/>
    </source>
</evidence>
<evidence type="ECO:0000255" key="2">
    <source>
        <dbReference type="PROSITE-ProRule" id="PRU00269"/>
    </source>
</evidence>
<evidence type="ECO:0000255" key="3">
    <source>
        <dbReference type="PROSITE-ProRule" id="PRU00878"/>
    </source>
</evidence>
<evidence type="ECO:0000255" key="4">
    <source>
        <dbReference type="PROSITE-ProRule" id="PRU00880"/>
    </source>
</evidence>
<evidence type="ECO:0000269" key="5">
    <source>
    </source>
</evidence>
<evidence type="ECO:0000269" key="6">
    <source>
    </source>
</evidence>
<evidence type="ECO:0000269" key="7">
    <source>
    </source>
</evidence>
<evidence type="ECO:0000269" key="8">
    <source>
    </source>
</evidence>
<evidence type="ECO:0000269" key="9">
    <source>
    </source>
</evidence>
<evidence type="ECO:0000303" key="10">
    <source>
    </source>
</evidence>
<evidence type="ECO:0000305" key="11"/>
<evidence type="ECO:0000312" key="12">
    <source>
        <dbReference type="Araport" id="AT1G60490"/>
    </source>
</evidence>
<evidence type="ECO:0000312" key="13">
    <source>
        <dbReference type="EMBL" id="AAB71971.1"/>
    </source>
</evidence>
<protein>
    <recommendedName>
        <fullName evidence="10">Phosphatidylinositol 3-kinase VPS34</fullName>
        <ecNumber evidence="1">2.7.1.137</ecNumber>
    </recommendedName>
    <alternativeName>
        <fullName evidence="10">PI3-kinase VPS34</fullName>
        <shortName evidence="10">AtVPS34</shortName>
        <shortName evidence="10">PI3K VPS34</shortName>
    </alternativeName>
    <alternativeName>
        <fullName evidence="10">PtdIns-3-kinase VSP34</fullName>
    </alternativeName>
</protein>
<feature type="chain" id="PRO_0000088819" description="Phosphatidylinositol 3-kinase VPS34">
    <location>
        <begin position="1"/>
        <end position="814"/>
    </location>
</feature>
<feature type="domain" description="C2 PI3K-type" evidence="4">
    <location>
        <begin position="25"/>
        <end position="177"/>
    </location>
</feature>
<feature type="domain" description="PIK helical" evidence="3">
    <location>
        <begin position="274"/>
        <end position="449"/>
    </location>
</feature>
<feature type="domain" description="PI3K/PI4K catalytic" evidence="2">
    <location>
        <begin position="532"/>
        <end position="799"/>
    </location>
</feature>
<feature type="region of interest" description="G-loop" evidence="2">
    <location>
        <begin position="538"/>
        <end position="544"/>
    </location>
</feature>
<feature type="region of interest" description="Catalytic loop" evidence="2">
    <location>
        <begin position="668"/>
        <end position="676"/>
    </location>
</feature>
<feature type="region of interest" description="Activation loop" evidence="2">
    <location>
        <begin position="687"/>
        <end position="708"/>
    </location>
</feature>
<feature type="sequence conflict" description="In Ref. 1; AAA83427." evidence="11" ref="1">
    <original>S</original>
    <variation>A</variation>
    <location>
        <position position="37"/>
    </location>
</feature>
<feature type="sequence conflict" description="In Ref. 1; AAA83427." evidence="11" ref="1">
    <original>KL</original>
    <variation>NW</variation>
    <location>
        <begin position="452"/>
        <end position="453"/>
    </location>
</feature>
<feature type="sequence conflict" description="In Ref. 1; AAA83427." evidence="11" ref="1">
    <original>G</original>
    <variation>R</variation>
    <location>
        <position position="557"/>
    </location>
</feature>
<proteinExistence type="evidence at protein level"/>
<organism>
    <name type="scientific">Arabidopsis thaliana</name>
    <name type="common">Mouse-ear cress</name>
    <dbReference type="NCBI Taxonomy" id="3702"/>
    <lineage>
        <taxon>Eukaryota</taxon>
        <taxon>Viridiplantae</taxon>
        <taxon>Streptophyta</taxon>
        <taxon>Embryophyta</taxon>
        <taxon>Tracheophyta</taxon>
        <taxon>Spermatophyta</taxon>
        <taxon>Magnoliopsida</taxon>
        <taxon>eudicotyledons</taxon>
        <taxon>Gunneridae</taxon>
        <taxon>Pentapetalae</taxon>
        <taxon>rosids</taxon>
        <taxon>malvids</taxon>
        <taxon>Brassicales</taxon>
        <taxon>Brassicaceae</taxon>
        <taxon>Camelineae</taxon>
        <taxon>Arabidopsis</taxon>
    </lineage>
</organism>
<keyword id="KW-0067">ATP-binding</keyword>
<keyword id="KW-0418">Kinase</keyword>
<keyword id="KW-0547">Nucleotide-binding</keyword>
<keyword id="KW-1185">Reference proteome</keyword>
<keyword id="KW-0808">Transferase</keyword>